<sequence>MKRLLNSATQLLLVLVLGISLSGCVTTHVPTATTSPWQAMDLDTQANPLDVAFTDSSHGYLVGSNRMIRETNDGGAHWNERSLDLPDEENFRLISIDFSGDEGWIAGQPGLLMHSDDGGQNWTRLFLDTKLPGEPYLITALGSHSAELATNVGAVYETHNDGSSWEAKVTDAAGAVRDLRRSKDGSYVSVSGLGNFYATWEPGDSVWQVHQRVSSQRLQSIGFQPDGNLWMVARGAQIRLNDEPGDFDSWSKAIIPITNGYGYMDLAWDDDGAIWAGGGNGTLLVSRDGGDSWENDPVGDRQPSNFTRMVFDGEHAFVLGERGNLLRWVDNAV</sequence>
<name>YCF48_SYNSC</name>
<keyword id="KW-0449">Lipoprotein</keyword>
<keyword id="KW-0472">Membrane</keyword>
<keyword id="KW-0564">Palmitate</keyword>
<keyword id="KW-0602">Photosynthesis</keyword>
<keyword id="KW-0604">Photosystem II</keyword>
<keyword id="KW-0732">Signal</keyword>
<keyword id="KW-0793">Thylakoid</keyword>
<reference key="1">
    <citation type="submission" date="2005-07" db="EMBL/GenBank/DDBJ databases">
        <title>Complete sequence of Synechococcus sp. CC9605.</title>
        <authorList>
            <consortium name="US DOE Joint Genome Institute"/>
            <person name="Copeland A."/>
            <person name="Lucas S."/>
            <person name="Lapidus A."/>
            <person name="Barry K."/>
            <person name="Detter J.C."/>
            <person name="Glavina T."/>
            <person name="Hammon N."/>
            <person name="Israni S."/>
            <person name="Pitluck S."/>
            <person name="Schmutz J."/>
            <person name="Martinez M."/>
            <person name="Larimer F."/>
            <person name="Land M."/>
            <person name="Kyrpides N."/>
            <person name="Ivanova N."/>
            <person name="Richardson P."/>
        </authorList>
    </citation>
    <scope>NUCLEOTIDE SEQUENCE [LARGE SCALE GENOMIC DNA]</scope>
    <source>
        <strain>CC9605</strain>
    </source>
</reference>
<comment type="function">
    <text evidence="1">A factor required for optimal assembly of photosystem II (PSII), acting in the early stages of PSII assembly. Also plays a role in replacement of photodamaged D1 (psbA). Assists YidC in synthesis of chlorophyll-binding proteins.</text>
</comment>
<comment type="subunit">
    <text evidence="1">Part of early PSII assembly complexes which includes D1 (psbA) and PsbI; not found in mature PSII. Binds to the lumenal side of PSII complexes. Interacts with YidC.</text>
</comment>
<comment type="subcellular location">
    <subcellularLocation>
        <location evidence="1">Cellular thylakoid membrane</location>
        <topology evidence="1">Lipid-anchor</topology>
        <orientation evidence="1">Lumenal side</orientation>
    </subcellularLocation>
    <text evidence="1">Associated with a PSII precusor complex on the lumenal side of the thylakoid membrane.</text>
</comment>
<comment type="domain">
    <text evidence="1">A 7-bladed beta-propeller torus, about 55 by 55 Angstroms, with a depth of about 25 Angstroms and a central pore.</text>
</comment>
<comment type="similarity">
    <text evidence="1">Belongs to the Ycf48 family.</text>
</comment>
<dbReference type="EMBL" id="CP000110">
    <property type="protein sequence ID" value="ABB33977.1"/>
    <property type="molecule type" value="Genomic_DNA"/>
</dbReference>
<dbReference type="RefSeq" id="WP_011363232.1">
    <property type="nucleotide sequence ID" value="NC_007516.1"/>
</dbReference>
<dbReference type="SMR" id="Q3AN55"/>
<dbReference type="STRING" id="110662.Syncc9605_0201"/>
<dbReference type="KEGG" id="syd:Syncc9605_0201"/>
<dbReference type="eggNOG" id="COG4447">
    <property type="taxonomic scope" value="Bacteria"/>
</dbReference>
<dbReference type="HOGENOM" id="CLU_057027_0_0_3"/>
<dbReference type="OrthoDB" id="9813892at2"/>
<dbReference type="GO" id="GO:0009523">
    <property type="term" value="C:photosystem II"/>
    <property type="evidence" value="ECO:0007669"/>
    <property type="project" value="UniProtKB-KW"/>
</dbReference>
<dbReference type="GO" id="GO:0031676">
    <property type="term" value="C:plasma membrane-derived thylakoid membrane"/>
    <property type="evidence" value="ECO:0007669"/>
    <property type="project" value="UniProtKB-SubCell"/>
</dbReference>
<dbReference type="GO" id="GO:0031977">
    <property type="term" value="C:thylakoid lumen"/>
    <property type="evidence" value="ECO:0007669"/>
    <property type="project" value="UniProtKB-UniRule"/>
</dbReference>
<dbReference type="GO" id="GO:0015979">
    <property type="term" value="P:photosynthesis"/>
    <property type="evidence" value="ECO:0007669"/>
    <property type="project" value="UniProtKB-KW"/>
</dbReference>
<dbReference type="Gene3D" id="2.130.10.10">
    <property type="entry name" value="YVTN repeat-like/Quinoprotein amine dehydrogenase"/>
    <property type="match status" value="2"/>
</dbReference>
<dbReference type="HAMAP" id="MF_01348">
    <property type="entry name" value="Ycf48"/>
    <property type="match status" value="1"/>
</dbReference>
<dbReference type="InterPro" id="IPR028203">
    <property type="entry name" value="PSII_CF48-like_dom"/>
</dbReference>
<dbReference type="InterPro" id="IPR015943">
    <property type="entry name" value="WD40/YVTN_repeat-like_dom_sf"/>
</dbReference>
<dbReference type="InterPro" id="IPR016705">
    <property type="entry name" value="Ycf48/Hcf136"/>
</dbReference>
<dbReference type="NCBIfam" id="NF010237">
    <property type="entry name" value="PRK13684.1"/>
    <property type="match status" value="1"/>
</dbReference>
<dbReference type="PANTHER" id="PTHR47199">
    <property type="entry name" value="PHOTOSYSTEM II STABILITY/ASSEMBLY FACTOR HCF136, CHLOROPLASTIC"/>
    <property type="match status" value="1"/>
</dbReference>
<dbReference type="PANTHER" id="PTHR47199:SF2">
    <property type="entry name" value="PHOTOSYSTEM II STABILITY_ASSEMBLY FACTOR HCF136, CHLOROPLASTIC"/>
    <property type="match status" value="1"/>
</dbReference>
<dbReference type="Pfam" id="PF14870">
    <property type="entry name" value="PSII_BNR"/>
    <property type="match status" value="1"/>
</dbReference>
<dbReference type="PIRSF" id="PIRSF017875">
    <property type="entry name" value="PSII_HCF136"/>
    <property type="match status" value="1"/>
</dbReference>
<dbReference type="SUPFAM" id="SSF110296">
    <property type="entry name" value="Oligoxyloglucan reducing end-specific cellobiohydrolase"/>
    <property type="match status" value="1"/>
</dbReference>
<dbReference type="PROSITE" id="PS51257">
    <property type="entry name" value="PROKAR_LIPOPROTEIN"/>
    <property type="match status" value="1"/>
</dbReference>
<protein>
    <recommendedName>
        <fullName evidence="1">Photosystem II assembly lipoprotein Ycf48</fullName>
    </recommendedName>
</protein>
<evidence type="ECO:0000255" key="1">
    <source>
        <dbReference type="HAMAP-Rule" id="MF_01348"/>
    </source>
</evidence>
<gene>
    <name evidence="1" type="primary">ycf48</name>
    <name type="ordered locus">Syncc9605_0201</name>
</gene>
<feature type="signal peptide" evidence="1">
    <location>
        <begin position="1"/>
        <end position="23"/>
    </location>
</feature>
<feature type="chain" id="PRO_0000239688" description="Photosystem II assembly lipoprotein Ycf48" evidence="1">
    <location>
        <begin position="24"/>
        <end position="333"/>
    </location>
</feature>
<feature type="lipid moiety-binding region" description="N-palmitoyl cysteine" evidence="1">
    <location>
        <position position="24"/>
    </location>
</feature>
<feature type="lipid moiety-binding region" description="S-diacylglycerol cysteine" evidence="1">
    <location>
        <position position="24"/>
    </location>
</feature>
<accession>Q3AN55</accession>
<proteinExistence type="inferred from homology"/>
<organism>
    <name type="scientific">Synechococcus sp. (strain CC9605)</name>
    <dbReference type="NCBI Taxonomy" id="110662"/>
    <lineage>
        <taxon>Bacteria</taxon>
        <taxon>Bacillati</taxon>
        <taxon>Cyanobacteriota</taxon>
        <taxon>Cyanophyceae</taxon>
        <taxon>Synechococcales</taxon>
        <taxon>Synechococcaceae</taxon>
        <taxon>Synechococcus</taxon>
    </lineage>
</organism>